<name>SYC_SYNFM</name>
<gene>
    <name evidence="1" type="primary">cysS</name>
    <name type="ordered locus">Sfum_1634</name>
</gene>
<reference key="1">
    <citation type="submission" date="2006-10" db="EMBL/GenBank/DDBJ databases">
        <title>Complete sequence of Syntrophobacter fumaroxidans MPOB.</title>
        <authorList>
            <consortium name="US DOE Joint Genome Institute"/>
            <person name="Copeland A."/>
            <person name="Lucas S."/>
            <person name="Lapidus A."/>
            <person name="Barry K."/>
            <person name="Detter J.C."/>
            <person name="Glavina del Rio T."/>
            <person name="Hammon N."/>
            <person name="Israni S."/>
            <person name="Pitluck S."/>
            <person name="Goltsman E.G."/>
            <person name="Martinez M."/>
            <person name="Schmutz J."/>
            <person name="Larimer F."/>
            <person name="Land M."/>
            <person name="Hauser L."/>
            <person name="Kyrpides N."/>
            <person name="Kim E."/>
            <person name="Boone D.R."/>
            <person name="Brockman F."/>
            <person name="Culley D."/>
            <person name="Ferry J."/>
            <person name="Gunsalus R."/>
            <person name="McInerney M.J."/>
            <person name="Morrison M."/>
            <person name="Plugge C."/>
            <person name="Rohlin L."/>
            <person name="Scholten J."/>
            <person name="Sieber J."/>
            <person name="Stams A.J.M."/>
            <person name="Worm P."/>
            <person name="Henstra A.M."/>
            <person name="Richardson P."/>
        </authorList>
    </citation>
    <scope>NUCLEOTIDE SEQUENCE [LARGE SCALE GENOMIC DNA]</scope>
    <source>
        <strain>DSM 10017 / MPOB</strain>
    </source>
</reference>
<keyword id="KW-0030">Aminoacyl-tRNA synthetase</keyword>
<keyword id="KW-0067">ATP-binding</keyword>
<keyword id="KW-0963">Cytoplasm</keyword>
<keyword id="KW-0436">Ligase</keyword>
<keyword id="KW-0479">Metal-binding</keyword>
<keyword id="KW-0547">Nucleotide-binding</keyword>
<keyword id="KW-0648">Protein biosynthesis</keyword>
<keyword id="KW-1185">Reference proteome</keyword>
<keyword id="KW-0862">Zinc</keyword>
<dbReference type="EC" id="6.1.1.16" evidence="1"/>
<dbReference type="EMBL" id="CP000478">
    <property type="protein sequence ID" value="ABK17321.1"/>
    <property type="molecule type" value="Genomic_DNA"/>
</dbReference>
<dbReference type="RefSeq" id="WP_011698491.1">
    <property type="nucleotide sequence ID" value="NC_008554.1"/>
</dbReference>
<dbReference type="SMR" id="A0LIR9"/>
<dbReference type="FunCoup" id="A0LIR9">
    <property type="interactions" value="506"/>
</dbReference>
<dbReference type="STRING" id="335543.Sfum_1634"/>
<dbReference type="KEGG" id="sfu:Sfum_1634"/>
<dbReference type="eggNOG" id="COG0215">
    <property type="taxonomic scope" value="Bacteria"/>
</dbReference>
<dbReference type="HOGENOM" id="CLU_013528_0_1_7"/>
<dbReference type="InParanoid" id="A0LIR9"/>
<dbReference type="OrthoDB" id="9815130at2"/>
<dbReference type="Proteomes" id="UP000001784">
    <property type="component" value="Chromosome"/>
</dbReference>
<dbReference type="GO" id="GO:0005829">
    <property type="term" value="C:cytosol"/>
    <property type="evidence" value="ECO:0007669"/>
    <property type="project" value="TreeGrafter"/>
</dbReference>
<dbReference type="GO" id="GO:0005524">
    <property type="term" value="F:ATP binding"/>
    <property type="evidence" value="ECO:0007669"/>
    <property type="project" value="UniProtKB-UniRule"/>
</dbReference>
<dbReference type="GO" id="GO:0004817">
    <property type="term" value="F:cysteine-tRNA ligase activity"/>
    <property type="evidence" value="ECO:0007669"/>
    <property type="project" value="UniProtKB-UniRule"/>
</dbReference>
<dbReference type="GO" id="GO:0008270">
    <property type="term" value="F:zinc ion binding"/>
    <property type="evidence" value="ECO:0007669"/>
    <property type="project" value="UniProtKB-UniRule"/>
</dbReference>
<dbReference type="GO" id="GO:0006423">
    <property type="term" value="P:cysteinyl-tRNA aminoacylation"/>
    <property type="evidence" value="ECO:0007669"/>
    <property type="project" value="UniProtKB-UniRule"/>
</dbReference>
<dbReference type="CDD" id="cd00672">
    <property type="entry name" value="CysRS_core"/>
    <property type="match status" value="1"/>
</dbReference>
<dbReference type="FunFam" id="3.40.50.620:FF:000009">
    <property type="entry name" value="Cysteine--tRNA ligase"/>
    <property type="match status" value="1"/>
</dbReference>
<dbReference type="Gene3D" id="1.20.120.1910">
    <property type="entry name" value="Cysteine-tRNA ligase, C-terminal anti-codon recognition domain"/>
    <property type="match status" value="1"/>
</dbReference>
<dbReference type="Gene3D" id="3.40.50.620">
    <property type="entry name" value="HUPs"/>
    <property type="match status" value="1"/>
</dbReference>
<dbReference type="HAMAP" id="MF_00041">
    <property type="entry name" value="Cys_tRNA_synth"/>
    <property type="match status" value="1"/>
</dbReference>
<dbReference type="InterPro" id="IPR015803">
    <property type="entry name" value="Cys-tRNA-ligase"/>
</dbReference>
<dbReference type="InterPro" id="IPR015273">
    <property type="entry name" value="Cys-tRNA-synt_Ia_DALR"/>
</dbReference>
<dbReference type="InterPro" id="IPR024909">
    <property type="entry name" value="Cys-tRNA/MSH_ligase"/>
</dbReference>
<dbReference type="InterPro" id="IPR056411">
    <property type="entry name" value="CysS_C"/>
</dbReference>
<dbReference type="InterPro" id="IPR014729">
    <property type="entry name" value="Rossmann-like_a/b/a_fold"/>
</dbReference>
<dbReference type="InterPro" id="IPR032678">
    <property type="entry name" value="tRNA-synt_1_cat_dom"/>
</dbReference>
<dbReference type="InterPro" id="IPR009080">
    <property type="entry name" value="tRNAsynth_Ia_anticodon-bd"/>
</dbReference>
<dbReference type="NCBIfam" id="TIGR00435">
    <property type="entry name" value="cysS"/>
    <property type="match status" value="1"/>
</dbReference>
<dbReference type="PANTHER" id="PTHR10890:SF3">
    <property type="entry name" value="CYSTEINE--TRNA LIGASE, CYTOPLASMIC"/>
    <property type="match status" value="1"/>
</dbReference>
<dbReference type="PANTHER" id="PTHR10890">
    <property type="entry name" value="CYSTEINYL-TRNA SYNTHETASE"/>
    <property type="match status" value="1"/>
</dbReference>
<dbReference type="Pfam" id="PF23493">
    <property type="entry name" value="CysS_C"/>
    <property type="match status" value="1"/>
</dbReference>
<dbReference type="Pfam" id="PF09190">
    <property type="entry name" value="DALR_2"/>
    <property type="match status" value="1"/>
</dbReference>
<dbReference type="Pfam" id="PF01406">
    <property type="entry name" value="tRNA-synt_1e"/>
    <property type="match status" value="1"/>
</dbReference>
<dbReference type="PRINTS" id="PR00983">
    <property type="entry name" value="TRNASYNTHCYS"/>
</dbReference>
<dbReference type="SMART" id="SM00840">
    <property type="entry name" value="DALR_2"/>
    <property type="match status" value="1"/>
</dbReference>
<dbReference type="SUPFAM" id="SSF47323">
    <property type="entry name" value="Anticodon-binding domain of a subclass of class I aminoacyl-tRNA synthetases"/>
    <property type="match status" value="1"/>
</dbReference>
<dbReference type="SUPFAM" id="SSF52374">
    <property type="entry name" value="Nucleotidylyl transferase"/>
    <property type="match status" value="1"/>
</dbReference>
<proteinExistence type="inferred from homology"/>
<comment type="catalytic activity">
    <reaction evidence="1">
        <text>tRNA(Cys) + L-cysteine + ATP = L-cysteinyl-tRNA(Cys) + AMP + diphosphate</text>
        <dbReference type="Rhea" id="RHEA:17773"/>
        <dbReference type="Rhea" id="RHEA-COMP:9661"/>
        <dbReference type="Rhea" id="RHEA-COMP:9679"/>
        <dbReference type="ChEBI" id="CHEBI:30616"/>
        <dbReference type="ChEBI" id="CHEBI:33019"/>
        <dbReference type="ChEBI" id="CHEBI:35235"/>
        <dbReference type="ChEBI" id="CHEBI:78442"/>
        <dbReference type="ChEBI" id="CHEBI:78517"/>
        <dbReference type="ChEBI" id="CHEBI:456215"/>
        <dbReference type="EC" id="6.1.1.16"/>
    </reaction>
</comment>
<comment type="cofactor">
    <cofactor evidence="1">
        <name>Zn(2+)</name>
        <dbReference type="ChEBI" id="CHEBI:29105"/>
    </cofactor>
    <text evidence="1">Binds 1 zinc ion per subunit.</text>
</comment>
<comment type="subunit">
    <text evidence="1">Monomer.</text>
</comment>
<comment type="subcellular location">
    <subcellularLocation>
        <location evidence="1">Cytoplasm</location>
    </subcellularLocation>
</comment>
<comment type="similarity">
    <text evidence="1">Belongs to the class-I aminoacyl-tRNA synthetase family.</text>
</comment>
<feature type="chain" id="PRO_1000071079" description="Cysteine--tRNA ligase">
    <location>
        <begin position="1"/>
        <end position="493"/>
    </location>
</feature>
<feature type="short sequence motif" description="'HIGH' region">
    <location>
        <begin position="31"/>
        <end position="41"/>
    </location>
</feature>
<feature type="short sequence motif" description="'KMSKS' region">
    <location>
        <begin position="266"/>
        <end position="270"/>
    </location>
</feature>
<feature type="binding site" evidence="1">
    <location>
        <position position="29"/>
    </location>
    <ligand>
        <name>Zn(2+)</name>
        <dbReference type="ChEBI" id="CHEBI:29105"/>
    </ligand>
</feature>
<feature type="binding site" evidence="1">
    <location>
        <position position="209"/>
    </location>
    <ligand>
        <name>Zn(2+)</name>
        <dbReference type="ChEBI" id="CHEBI:29105"/>
    </ligand>
</feature>
<feature type="binding site" evidence="1">
    <location>
        <position position="234"/>
    </location>
    <ligand>
        <name>Zn(2+)</name>
        <dbReference type="ChEBI" id="CHEBI:29105"/>
    </ligand>
</feature>
<feature type="binding site" evidence="1">
    <location>
        <position position="238"/>
    </location>
    <ligand>
        <name>Zn(2+)</name>
        <dbReference type="ChEBI" id="CHEBI:29105"/>
    </ligand>
</feature>
<feature type="binding site" evidence="1">
    <location>
        <position position="269"/>
    </location>
    <ligand>
        <name>ATP</name>
        <dbReference type="ChEBI" id="CHEBI:30616"/>
    </ligand>
</feature>
<evidence type="ECO:0000255" key="1">
    <source>
        <dbReference type="HAMAP-Rule" id="MF_00041"/>
    </source>
</evidence>
<accession>A0LIR9</accession>
<sequence length="493" mass="55593">MVLHVYNTLTKSKEEFIPLEPGKVKFYVCGVTVYDLSHIGHARSAIVFDVIYRYLRFLGFEVTYVRNFTDVDDKIIRRANDAGTDCRSIAQRYIAAFYEDMDALGVLRPDLEPLATENVPGMIEIIRVLMDKGIAYQAGADVFFEIEKFPGYGKLSGRQIEDMLAGARVEVDARKRNPLDFVLWKGSKPGEPSWDSPWGPGRPGWHIECSAMGSRFLGKTFDIHGGGKDLIFPHHENEIAQSEAAFGMPFVRYWLHNGFVNINNEKMSKSLGNFLTIRDVLQKVHPETVRFFVLSKHYRSPVDFSDETIGEAEKGLERLYGTLGAVKERAAAGVEEAFQEKALRGQDPELFDQIAALSGAFREAMDNDFNTAQALGNLFSLQRHLQRFLDKFGRKQLKGPASALARAGADAIRDHALVLGLLTREPEAFQAEQRSLKIKSTGLTEAEVERCIELRRQARQDKNFAEADRLREEIEKKGIQLEDSPAGTRWRVG</sequence>
<protein>
    <recommendedName>
        <fullName evidence="1">Cysteine--tRNA ligase</fullName>
        <ecNumber evidence="1">6.1.1.16</ecNumber>
    </recommendedName>
    <alternativeName>
        <fullName evidence="1">Cysteinyl-tRNA synthetase</fullName>
        <shortName evidence="1">CysRS</shortName>
    </alternativeName>
</protein>
<organism>
    <name type="scientific">Syntrophobacter fumaroxidans (strain DSM 10017 / MPOB)</name>
    <dbReference type="NCBI Taxonomy" id="335543"/>
    <lineage>
        <taxon>Bacteria</taxon>
        <taxon>Pseudomonadati</taxon>
        <taxon>Thermodesulfobacteriota</taxon>
        <taxon>Syntrophobacteria</taxon>
        <taxon>Syntrophobacterales</taxon>
        <taxon>Syntrophobacteraceae</taxon>
        <taxon>Syntrophobacter</taxon>
    </lineage>
</organism>